<gene>
    <name evidence="2" type="primary">rpsL</name>
    <name type="ordered locus">VC_0359</name>
</gene>
<keyword id="KW-0488">Methylation</keyword>
<keyword id="KW-1185">Reference proteome</keyword>
<keyword id="KW-0687">Ribonucleoprotein</keyword>
<keyword id="KW-0689">Ribosomal protein</keyword>
<keyword id="KW-0694">RNA-binding</keyword>
<keyword id="KW-0699">rRNA-binding</keyword>
<keyword id="KW-0820">tRNA-binding</keyword>
<evidence type="ECO:0000250" key="1"/>
<evidence type="ECO:0000255" key="2">
    <source>
        <dbReference type="HAMAP-Rule" id="MF_00403"/>
    </source>
</evidence>
<evidence type="ECO:0000305" key="3"/>
<reference key="1">
    <citation type="journal article" date="2000" name="Nature">
        <title>DNA sequence of both chromosomes of the cholera pathogen Vibrio cholerae.</title>
        <authorList>
            <person name="Heidelberg J.F."/>
            <person name="Eisen J.A."/>
            <person name="Nelson W.C."/>
            <person name="Clayton R.A."/>
            <person name="Gwinn M.L."/>
            <person name="Dodson R.J."/>
            <person name="Haft D.H."/>
            <person name="Hickey E.K."/>
            <person name="Peterson J.D."/>
            <person name="Umayam L.A."/>
            <person name="Gill S.R."/>
            <person name="Nelson K.E."/>
            <person name="Read T.D."/>
            <person name="Tettelin H."/>
            <person name="Richardson D.L."/>
            <person name="Ermolaeva M.D."/>
            <person name="Vamathevan J.J."/>
            <person name="Bass S."/>
            <person name="Qin H."/>
            <person name="Dragoi I."/>
            <person name="Sellers P."/>
            <person name="McDonald L.A."/>
            <person name="Utterback T.R."/>
            <person name="Fleischmann R.D."/>
            <person name="Nierman W.C."/>
            <person name="White O."/>
            <person name="Salzberg S.L."/>
            <person name="Smith H.O."/>
            <person name="Colwell R.R."/>
            <person name="Mekalanos J.J."/>
            <person name="Venter J.C."/>
            <person name="Fraser C.M."/>
        </authorList>
    </citation>
    <scope>NUCLEOTIDE SEQUENCE [LARGE SCALE GENOMIC DNA]</scope>
    <source>
        <strain>ATCC 39315 / El Tor Inaba N16961</strain>
    </source>
</reference>
<organism>
    <name type="scientific">Vibrio cholerae serotype O1 (strain ATCC 39315 / El Tor Inaba N16961)</name>
    <dbReference type="NCBI Taxonomy" id="243277"/>
    <lineage>
        <taxon>Bacteria</taxon>
        <taxon>Pseudomonadati</taxon>
        <taxon>Pseudomonadota</taxon>
        <taxon>Gammaproteobacteria</taxon>
        <taxon>Vibrionales</taxon>
        <taxon>Vibrionaceae</taxon>
        <taxon>Vibrio</taxon>
    </lineage>
</organism>
<sequence length="124" mass="13665">MATINQLVRKPRAKQVVKSNVPALAACPQKRGVCTRVYTTTPKKPNSALRKVCRVRLTNGFEVTSYIGGEGHNLQEHSVVLIRGGRVKDLPGVRYHTVRGALDCAGVNDRKQARSKYGVKRPKS</sequence>
<comment type="function">
    <text evidence="2">With S4 and S5 plays an important role in translational accuracy.</text>
</comment>
<comment type="function">
    <text evidence="2">Interacts with and stabilizes bases of the 16S rRNA that are involved in tRNA selection in the A site and with the mRNA backbone. Located at the interface of the 30S and 50S subunits, it traverses the body of the 30S subunit contacting proteins on the other side and probably holding the rRNA structure together. The combined cluster of proteins S8, S12 and S17 appears to hold together the shoulder and platform of the 30S subunit.</text>
</comment>
<comment type="subunit">
    <text evidence="2">Part of the 30S ribosomal subunit. Contacts proteins S8 and S17. May interact with IF1 in the 30S initiation complex.</text>
</comment>
<comment type="similarity">
    <text evidence="2">Belongs to the universal ribosomal protein uS12 family.</text>
</comment>
<dbReference type="EMBL" id="AE003852">
    <property type="protein sequence ID" value="AAF93532.1"/>
    <property type="molecule type" value="Genomic_DNA"/>
</dbReference>
<dbReference type="PIR" id="A82332">
    <property type="entry name" value="A82332"/>
</dbReference>
<dbReference type="RefSeq" id="NP_230013.1">
    <property type="nucleotide sequence ID" value="NC_002505.1"/>
</dbReference>
<dbReference type="RefSeq" id="WP_000201237.1">
    <property type="nucleotide sequence ID" value="NZ_LT906614.1"/>
</dbReference>
<dbReference type="SMR" id="Q9KUZ9"/>
<dbReference type="STRING" id="243277.VC_0359"/>
<dbReference type="DNASU" id="2615038"/>
<dbReference type="EnsemblBacteria" id="AAF93532">
    <property type="protein sequence ID" value="AAF93532"/>
    <property type="gene ID" value="VC_0359"/>
</dbReference>
<dbReference type="GeneID" id="94014859"/>
<dbReference type="KEGG" id="vch:VC_0359"/>
<dbReference type="PATRIC" id="fig|243277.26.peg.336"/>
<dbReference type="eggNOG" id="COG0048">
    <property type="taxonomic scope" value="Bacteria"/>
</dbReference>
<dbReference type="HOGENOM" id="CLU_104295_1_2_6"/>
<dbReference type="Proteomes" id="UP000000584">
    <property type="component" value="Chromosome 1"/>
</dbReference>
<dbReference type="GO" id="GO:0005840">
    <property type="term" value="C:ribosome"/>
    <property type="evidence" value="ECO:0000318"/>
    <property type="project" value="GO_Central"/>
</dbReference>
<dbReference type="GO" id="GO:0015935">
    <property type="term" value="C:small ribosomal subunit"/>
    <property type="evidence" value="ECO:0007669"/>
    <property type="project" value="InterPro"/>
</dbReference>
<dbReference type="GO" id="GO:0019843">
    <property type="term" value="F:rRNA binding"/>
    <property type="evidence" value="ECO:0007669"/>
    <property type="project" value="UniProtKB-UniRule"/>
</dbReference>
<dbReference type="GO" id="GO:0003735">
    <property type="term" value="F:structural constituent of ribosome"/>
    <property type="evidence" value="ECO:0000318"/>
    <property type="project" value="GO_Central"/>
</dbReference>
<dbReference type="GO" id="GO:0000049">
    <property type="term" value="F:tRNA binding"/>
    <property type="evidence" value="ECO:0007669"/>
    <property type="project" value="UniProtKB-UniRule"/>
</dbReference>
<dbReference type="GO" id="GO:0006412">
    <property type="term" value="P:translation"/>
    <property type="evidence" value="ECO:0000318"/>
    <property type="project" value="GO_Central"/>
</dbReference>
<dbReference type="CDD" id="cd03368">
    <property type="entry name" value="Ribosomal_S12"/>
    <property type="match status" value="1"/>
</dbReference>
<dbReference type="FunFam" id="2.40.50.140:FF:000001">
    <property type="entry name" value="30S ribosomal protein S12"/>
    <property type="match status" value="1"/>
</dbReference>
<dbReference type="Gene3D" id="2.40.50.140">
    <property type="entry name" value="Nucleic acid-binding proteins"/>
    <property type="match status" value="1"/>
</dbReference>
<dbReference type="HAMAP" id="MF_00403_B">
    <property type="entry name" value="Ribosomal_uS12_B"/>
    <property type="match status" value="1"/>
</dbReference>
<dbReference type="InterPro" id="IPR012340">
    <property type="entry name" value="NA-bd_OB-fold"/>
</dbReference>
<dbReference type="InterPro" id="IPR006032">
    <property type="entry name" value="Ribosomal_uS12"/>
</dbReference>
<dbReference type="InterPro" id="IPR005679">
    <property type="entry name" value="Ribosomal_uS12_bac"/>
</dbReference>
<dbReference type="NCBIfam" id="TIGR00981">
    <property type="entry name" value="rpsL_bact"/>
    <property type="match status" value="1"/>
</dbReference>
<dbReference type="PANTHER" id="PTHR11652">
    <property type="entry name" value="30S RIBOSOMAL PROTEIN S12 FAMILY MEMBER"/>
    <property type="match status" value="1"/>
</dbReference>
<dbReference type="Pfam" id="PF00164">
    <property type="entry name" value="Ribosom_S12_S23"/>
    <property type="match status" value="1"/>
</dbReference>
<dbReference type="PIRSF" id="PIRSF002133">
    <property type="entry name" value="Ribosomal_S12/S23"/>
    <property type="match status" value="1"/>
</dbReference>
<dbReference type="PRINTS" id="PR01034">
    <property type="entry name" value="RIBOSOMALS12"/>
</dbReference>
<dbReference type="SUPFAM" id="SSF50249">
    <property type="entry name" value="Nucleic acid-binding proteins"/>
    <property type="match status" value="1"/>
</dbReference>
<dbReference type="PROSITE" id="PS00055">
    <property type="entry name" value="RIBOSOMAL_S12"/>
    <property type="match status" value="1"/>
</dbReference>
<proteinExistence type="inferred from homology"/>
<accession>Q9KUZ9</accession>
<feature type="chain" id="PRO_0000146350" description="Small ribosomal subunit protein uS12">
    <location>
        <begin position="1"/>
        <end position="124"/>
    </location>
</feature>
<feature type="modified residue" description="3-methylthioaspartic acid" evidence="1">
    <location>
        <position position="89"/>
    </location>
</feature>
<name>RS12_VIBCH</name>
<protein>
    <recommendedName>
        <fullName evidence="2">Small ribosomal subunit protein uS12</fullName>
    </recommendedName>
    <alternativeName>
        <fullName evidence="3">30S ribosomal protein S12</fullName>
    </alternativeName>
</protein>